<gene>
    <name evidence="1" type="primary">MT-ND2</name>
    <name type="synonym">MTND2</name>
    <name type="synonym">NADH2</name>
    <name type="synonym">ND2</name>
</gene>
<name>NU2M_CANRF</name>
<accession>Q2TGY6</accession>
<feature type="chain" id="PRO_0000226702" description="NADH-ubiquinone oxidoreductase chain 2">
    <location>
        <begin position="1"/>
        <end position="347"/>
    </location>
</feature>
<feature type="transmembrane region" description="Helical" evidence="3">
    <location>
        <begin position="3"/>
        <end position="23"/>
    </location>
</feature>
<feature type="transmembrane region" description="Helical" evidence="3">
    <location>
        <begin position="25"/>
        <end position="45"/>
    </location>
</feature>
<feature type="transmembrane region" description="Helical" evidence="3">
    <location>
        <begin position="66"/>
        <end position="86"/>
    </location>
</feature>
<feature type="transmembrane region" description="Helical" evidence="3">
    <location>
        <begin position="96"/>
        <end position="116"/>
    </location>
</feature>
<feature type="transmembrane region" description="Helical" evidence="3">
    <location>
        <begin position="122"/>
        <end position="142"/>
    </location>
</feature>
<feature type="transmembrane region" description="Helical" evidence="3">
    <location>
        <begin position="149"/>
        <end position="169"/>
    </location>
</feature>
<feature type="transmembrane region" description="Helical" evidence="3">
    <location>
        <begin position="178"/>
        <end position="198"/>
    </location>
</feature>
<feature type="transmembrane region" description="Helical" evidence="3">
    <location>
        <begin position="201"/>
        <end position="221"/>
    </location>
</feature>
<feature type="transmembrane region" description="Helical" evidence="3">
    <location>
        <begin position="237"/>
        <end position="257"/>
    </location>
</feature>
<feature type="transmembrane region" description="Helical" evidence="3">
    <location>
        <begin position="274"/>
        <end position="294"/>
    </location>
</feature>
<feature type="transmembrane region" description="Helical" evidence="3">
    <location>
        <begin position="323"/>
        <end position="343"/>
    </location>
</feature>
<evidence type="ECO:0000250" key="1">
    <source>
        <dbReference type="UniProtKB" id="P03891"/>
    </source>
</evidence>
<evidence type="ECO:0000250" key="2">
    <source>
        <dbReference type="UniProtKB" id="P03892"/>
    </source>
</evidence>
<evidence type="ECO:0000255" key="3"/>
<evidence type="ECO:0000305" key="4"/>
<organism>
    <name type="scientific">Canis rufus</name>
    <name type="common">Red wolf</name>
    <name type="synonym">Canis lupus rufus</name>
    <dbReference type="NCBI Taxonomy" id="45781"/>
    <lineage>
        <taxon>Eukaryota</taxon>
        <taxon>Metazoa</taxon>
        <taxon>Chordata</taxon>
        <taxon>Craniata</taxon>
        <taxon>Vertebrata</taxon>
        <taxon>Euteleostomi</taxon>
        <taxon>Mammalia</taxon>
        <taxon>Eutheria</taxon>
        <taxon>Laurasiatheria</taxon>
        <taxon>Carnivora</taxon>
        <taxon>Caniformia</taxon>
        <taxon>Canidae</taxon>
        <taxon>Canis</taxon>
    </lineage>
</organism>
<proteinExistence type="inferred from homology"/>
<reference key="1">
    <citation type="journal article" date="2006" name="Genetica">
        <title>Phylogeny of the caniform carnivora: evidence from multiple genes.</title>
        <authorList>
            <person name="Yu L."/>
            <person name="Zhang Y.P."/>
        </authorList>
    </citation>
    <scope>NUCLEOTIDE SEQUENCE [GENOMIC DNA]</scope>
</reference>
<comment type="function">
    <text evidence="1">Core subunit of the mitochondrial membrane respiratory chain NADH dehydrogenase (Complex I) which catalyzes electron transfer from NADH through the respiratory chain, using ubiquinone as an electron acceptor. Essential for the catalytic activity and assembly of complex I.</text>
</comment>
<comment type="catalytic activity">
    <reaction evidence="1">
        <text>a ubiquinone + NADH + 5 H(+)(in) = a ubiquinol + NAD(+) + 4 H(+)(out)</text>
        <dbReference type="Rhea" id="RHEA:29091"/>
        <dbReference type="Rhea" id="RHEA-COMP:9565"/>
        <dbReference type="Rhea" id="RHEA-COMP:9566"/>
        <dbReference type="ChEBI" id="CHEBI:15378"/>
        <dbReference type="ChEBI" id="CHEBI:16389"/>
        <dbReference type="ChEBI" id="CHEBI:17976"/>
        <dbReference type="ChEBI" id="CHEBI:57540"/>
        <dbReference type="ChEBI" id="CHEBI:57945"/>
        <dbReference type="EC" id="7.1.1.2"/>
    </reaction>
</comment>
<comment type="subunit">
    <text evidence="1 2">Core subunit of respiratory chain NADH dehydrogenase (Complex I) which is composed of 45 different subunits. Interacts with TMEM242 (By similarity).</text>
</comment>
<comment type="subcellular location">
    <subcellularLocation>
        <location evidence="2">Mitochondrion inner membrane</location>
        <topology evidence="3">Multi-pass membrane protein</topology>
    </subcellularLocation>
</comment>
<comment type="similarity">
    <text evidence="4">Belongs to the complex I subunit 2 family.</text>
</comment>
<sequence length="347" mass="38988">MKPPILIIIMATIMTGTMIVMLSSHWLLIWIGFEMNMLAVIPVLMKKYNPRTMEASTKYFLTQATASMLLMMGVTINLLYSGQWVVSKISNPAASIMMTIALTMKLGLSPFHFWVPEVTQGITLTSGMILLTWQKIAPMSVLYQISPSINTNLLMLVALVSVLVGGWGGLNQTQLRKIMAYSSIAHMGWMAAIIIYNPTMMILNLVLYILMTLSTFMLFMLNSSTTTLSLSHMWNKFPLITSIILILMLSLGGLPPLSGFIPKWMIIQELTKNNMIIIPTLMAITALLNLYFYLRLTYSTALTMFPSANNMKMKWQFEHTKKTILLPPLIITSTMLLPLTPMLSILD</sequence>
<protein>
    <recommendedName>
        <fullName evidence="1">NADH-ubiquinone oxidoreductase chain 2</fullName>
        <ecNumber evidence="1">7.1.1.2</ecNumber>
    </recommendedName>
    <alternativeName>
        <fullName>NADH dehydrogenase subunit 2</fullName>
    </alternativeName>
</protein>
<dbReference type="EC" id="7.1.1.2" evidence="1"/>
<dbReference type="EMBL" id="AY882058">
    <property type="protein sequence ID" value="AAX76793.1"/>
    <property type="molecule type" value="Genomic_DNA"/>
</dbReference>
<dbReference type="SMR" id="Q2TGY6"/>
<dbReference type="GO" id="GO:0005743">
    <property type="term" value="C:mitochondrial inner membrane"/>
    <property type="evidence" value="ECO:0000250"/>
    <property type="project" value="UniProtKB"/>
</dbReference>
<dbReference type="GO" id="GO:0008137">
    <property type="term" value="F:NADH dehydrogenase (ubiquinone) activity"/>
    <property type="evidence" value="ECO:0000250"/>
    <property type="project" value="UniProtKB"/>
</dbReference>
<dbReference type="GO" id="GO:0006120">
    <property type="term" value="P:mitochondrial electron transport, NADH to ubiquinone"/>
    <property type="evidence" value="ECO:0000250"/>
    <property type="project" value="UniProtKB"/>
</dbReference>
<dbReference type="GO" id="GO:0032981">
    <property type="term" value="P:mitochondrial respiratory chain complex I assembly"/>
    <property type="evidence" value="ECO:0000250"/>
    <property type="project" value="UniProtKB"/>
</dbReference>
<dbReference type="InterPro" id="IPR050175">
    <property type="entry name" value="Complex_I_Subunit_2"/>
</dbReference>
<dbReference type="InterPro" id="IPR010933">
    <property type="entry name" value="NADH_DH_su2_C"/>
</dbReference>
<dbReference type="InterPro" id="IPR003917">
    <property type="entry name" value="NADH_UbQ_OxRdtase_chain2"/>
</dbReference>
<dbReference type="InterPro" id="IPR001750">
    <property type="entry name" value="ND/Mrp_TM"/>
</dbReference>
<dbReference type="PANTHER" id="PTHR46552">
    <property type="entry name" value="NADH-UBIQUINONE OXIDOREDUCTASE CHAIN 2"/>
    <property type="match status" value="1"/>
</dbReference>
<dbReference type="PANTHER" id="PTHR46552:SF1">
    <property type="entry name" value="NADH-UBIQUINONE OXIDOREDUCTASE CHAIN 2"/>
    <property type="match status" value="1"/>
</dbReference>
<dbReference type="Pfam" id="PF06444">
    <property type="entry name" value="NADH_dehy_S2_C"/>
    <property type="match status" value="1"/>
</dbReference>
<dbReference type="Pfam" id="PF00361">
    <property type="entry name" value="Proton_antipo_M"/>
    <property type="match status" value="1"/>
</dbReference>
<dbReference type="PRINTS" id="PR01436">
    <property type="entry name" value="NADHDHGNASE2"/>
</dbReference>
<keyword id="KW-0249">Electron transport</keyword>
<keyword id="KW-0472">Membrane</keyword>
<keyword id="KW-0496">Mitochondrion</keyword>
<keyword id="KW-0999">Mitochondrion inner membrane</keyword>
<keyword id="KW-0520">NAD</keyword>
<keyword id="KW-0679">Respiratory chain</keyword>
<keyword id="KW-1278">Translocase</keyword>
<keyword id="KW-0812">Transmembrane</keyword>
<keyword id="KW-1133">Transmembrane helix</keyword>
<keyword id="KW-0813">Transport</keyword>
<keyword id="KW-0830">Ubiquinone</keyword>
<geneLocation type="mitochondrion"/>